<reference key="1">
    <citation type="journal article" date="2006" name="Proc. Natl. Acad. Sci. U.S.A.">
        <title>Burkholderia xenovorans LB400 harbors a multi-replicon, 9.73-Mbp genome shaped for versatility.</title>
        <authorList>
            <person name="Chain P.S.G."/>
            <person name="Denef V.J."/>
            <person name="Konstantinidis K.T."/>
            <person name="Vergez L.M."/>
            <person name="Agullo L."/>
            <person name="Reyes V.L."/>
            <person name="Hauser L."/>
            <person name="Cordova M."/>
            <person name="Gomez L."/>
            <person name="Gonzalez M."/>
            <person name="Land M."/>
            <person name="Lao V."/>
            <person name="Larimer F."/>
            <person name="LiPuma J.J."/>
            <person name="Mahenthiralingam E."/>
            <person name="Malfatti S.A."/>
            <person name="Marx C.J."/>
            <person name="Parnell J.J."/>
            <person name="Ramette A."/>
            <person name="Richardson P."/>
            <person name="Seeger M."/>
            <person name="Smith D."/>
            <person name="Spilker T."/>
            <person name="Sul W.J."/>
            <person name="Tsoi T.V."/>
            <person name="Ulrich L.E."/>
            <person name="Zhulin I.B."/>
            <person name="Tiedje J.M."/>
        </authorList>
    </citation>
    <scope>NUCLEOTIDE SEQUENCE [LARGE SCALE GENOMIC DNA]</scope>
    <source>
        <strain>LB400</strain>
    </source>
</reference>
<gene>
    <name evidence="1" type="primary">metN2</name>
    <name type="ordered locus">Bxeno_B2133</name>
    <name type="ORF">Bxe_B0853</name>
</gene>
<keyword id="KW-0029">Amino-acid transport</keyword>
<keyword id="KW-0067">ATP-binding</keyword>
<keyword id="KW-0997">Cell inner membrane</keyword>
<keyword id="KW-1003">Cell membrane</keyword>
<keyword id="KW-0472">Membrane</keyword>
<keyword id="KW-0547">Nucleotide-binding</keyword>
<keyword id="KW-1185">Reference proteome</keyword>
<keyword id="KW-1278">Translocase</keyword>
<keyword id="KW-0813">Transport</keyword>
<comment type="function">
    <text evidence="1">Part of the ABC transporter complex MetNIQ involved in methionine import. Responsible for energy coupling to the transport system.</text>
</comment>
<comment type="catalytic activity">
    <reaction evidence="1">
        <text>L-methionine(out) + ATP + H2O = L-methionine(in) + ADP + phosphate + H(+)</text>
        <dbReference type="Rhea" id="RHEA:29779"/>
        <dbReference type="ChEBI" id="CHEBI:15377"/>
        <dbReference type="ChEBI" id="CHEBI:15378"/>
        <dbReference type="ChEBI" id="CHEBI:30616"/>
        <dbReference type="ChEBI" id="CHEBI:43474"/>
        <dbReference type="ChEBI" id="CHEBI:57844"/>
        <dbReference type="ChEBI" id="CHEBI:456216"/>
        <dbReference type="EC" id="7.4.2.11"/>
    </reaction>
</comment>
<comment type="catalytic activity">
    <reaction evidence="1">
        <text>D-methionine(out) + ATP + H2O = D-methionine(in) + ADP + phosphate + H(+)</text>
        <dbReference type="Rhea" id="RHEA:29767"/>
        <dbReference type="ChEBI" id="CHEBI:15377"/>
        <dbReference type="ChEBI" id="CHEBI:15378"/>
        <dbReference type="ChEBI" id="CHEBI:30616"/>
        <dbReference type="ChEBI" id="CHEBI:43474"/>
        <dbReference type="ChEBI" id="CHEBI:57932"/>
        <dbReference type="ChEBI" id="CHEBI:456216"/>
        <dbReference type="EC" id="7.4.2.11"/>
    </reaction>
</comment>
<comment type="subunit">
    <text evidence="1">The complex is composed of two ATP-binding proteins (MetN), two transmembrane proteins (MetI) and a solute-binding protein (MetQ).</text>
</comment>
<comment type="subcellular location">
    <subcellularLocation>
        <location evidence="1">Cell inner membrane</location>
        <topology evidence="1">Peripheral membrane protein</topology>
    </subcellularLocation>
</comment>
<comment type="similarity">
    <text evidence="1">Belongs to the ABC transporter superfamily. Methionine importer (TC 3.A.1.24) family.</text>
</comment>
<feature type="chain" id="PRO_0000270273" description="Methionine import ATP-binding protein MetN 2">
    <location>
        <begin position="1"/>
        <end position="386"/>
    </location>
</feature>
<feature type="domain" description="ABC transporter" evidence="1">
    <location>
        <begin position="32"/>
        <end position="272"/>
    </location>
</feature>
<feature type="binding site" evidence="1">
    <location>
        <begin position="69"/>
        <end position="76"/>
    </location>
    <ligand>
        <name>ATP</name>
        <dbReference type="ChEBI" id="CHEBI:30616"/>
    </ligand>
</feature>
<dbReference type="EC" id="7.4.2.11" evidence="1"/>
<dbReference type="EMBL" id="CP000271">
    <property type="protein sequence ID" value="ABE35101.1"/>
    <property type="molecule type" value="Genomic_DNA"/>
</dbReference>
<dbReference type="RefSeq" id="WP_011492402.1">
    <property type="nucleotide sequence ID" value="NC_007952.1"/>
</dbReference>
<dbReference type="SMR" id="Q13LD8"/>
<dbReference type="STRING" id="266265.Bxe_B0853"/>
<dbReference type="KEGG" id="bxb:DR64_6175"/>
<dbReference type="KEGG" id="bxe:Bxe_B0853"/>
<dbReference type="PATRIC" id="fig|266265.5.peg.6927"/>
<dbReference type="eggNOG" id="COG1135">
    <property type="taxonomic scope" value="Bacteria"/>
</dbReference>
<dbReference type="OrthoDB" id="9802264at2"/>
<dbReference type="Proteomes" id="UP000001817">
    <property type="component" value="Chromosome 2"/>
</dbReference>
<dbReference type="GO" id="GO:0005886">
    <property type="term" value="C:plasma membrane"/>
    <property type="evidence" value="ECO:0007669"/>
    <property type="project" value="UniProtKB-SubCell"/>
</dbReference>
<dbReference type="GO" id="GO:0033232">
    <property type="term" value="F:ABC-type D-methionine transporter activity"/>
    <property type="evidence" value="ECO:0007669"/>
    <property type="project" value="UniProtKB-EC"/>
</dbReference>
<dbReference type="GO" id="GO:0005524">
    <property type="term" value="F:ATP binding"/>
    <property type="evidence" value="ECO:0007669"/>
    <property type="project" value="UniProtKB-KW"/>
</dbReference>
<dbReference type="GO" id="GO:0016887">
    <property type="term" value="F:ATP hydrolysis activity"/>
    <property type="evidence" value="ECO:0007669"/>
    <property type="project" value="InterPro"/>
</dbReference>
<dbReference type="CDD" id="cd03258">
    <property type="entry name" value="ABC_MetN_methionine_transporter"/>
    <property type="match status" value="1"/>
</dbReference>
<dbReference type="FunFam" id="3.40.50.300:FF:000056">
    <property type="entry name" value="Cell division ATP-binding protein FtsE"/>
    <property type="match status" value="1"/>
</dbReference>
<dbReference type="Gene3D" id="3.30.70.260">
    <property type="match status" value="1"/>
</dbReference>
<dbReference type="Gene3D" id="3.40.50.300">
    <property type="entry name" value="P-loop containing nucleotide triphosphate hydrolases"/>
    <property type="match status" value="1"/>
</dbReference>
<dbReference type="InterPro" id="IPR003593">
    <property type="entry name" value="AAA+_ATPase"/>
</dbReference>
<dbReference type="InterPro" id="IPR003439">
    <property type="entry name" value="ABC_transporter-like_ATP-bd"/>
</dbReference>
<dbReference type="InterPro" id="IPR017871">
    <property type="entry name" value="ABC_transporter-like_CS"/>
</dbReference>
<dbReference type="InterPro" id="IPR045865">
    <property type="entry name" value="ACT-like_dom_sf"/>
</dbReference>
<dbReference type="InterPro" id="IPR041701">
    <property type="entry name" value="MetN_ABC"/>
</dbReference>
<dbReference type="InterPro" id="IPR050086">
    <property type="entry name" value="MetN_ABC_transporter-like"/>
</dbReference>
<dbReference type="InterPro" id="IPR018449">
    <property type="entry name" value="NIL_domain"/>
</dbReference>
<dbReference type="InterPro" id="IPR027417">
    <property type="entry name" value="P-loop_NTPase"/>
</dbReference>
<dbReference type="PANTHER" id="PTHR43166">
    <property type="entry name" value="AMINO ACID IMPORT ATP-BINDING PROTEIN"/>
    <property type="match status" value="1"/>
</dbReference>
<dbReference type="PANTHER" id="PTHR43166:SF30">
    <property type="entry name" value="METHIONINE IMPORT ATP-BINDING PROTEIN METN"/>
    <property type="match status" value="1"/>
</dbReference>
<dbReference type="Pfam" id="PF00005">
    <property type="entry name" value="ABC_tran"/>
    <property type="match status" value="1"/>
</dbReference>
<dbReference type="Pfam" id="PF09383">
    <property type="entry name" value="NIL"/>
    <property type="match status" value="1"/>
</dbReference>
<dbReference type="SMART" id="SM00382">
    <property type="entry name" value="AAA"/>
    <property type="match status" value="1"/>
</dbReference>
<dbReference type="SMART" id="SM00930">
    <property type="entry name" value="NIL"/>
    <property type="match status" value="1"/>
</dbReference>
<dbReference type="SUPFAM" id="SSF55021">
    <property type="entry name" value="ACT-like"/>
    <property type="match status" value="1"/>
</dbReference>
<dbReference type="SUPFAM" id="SSF52540">
    <property type="entry name" value="P-loop containing nucleoside triphosphate hydrolases"/>
    <property type="match status" value="1"/>
</dbReference>
<dbReference type="PROSITE" id="PS00211">
    <property type="entry name" value="ABC_TRANSPORTER_1"/>
    <property type="match status" value="1"/>
</dbReference>
<dbReference type="PROSITE" id="PS50893">
    <property type="entry name" value="ABC_TRANSPORTER_2"/>
    <property type="match status" value="1"/>
</dbReference>
<dbReference type="PROSITE" id="PS51264">
    <property type="entry name" value="METN"/>
    <property type="match status" value="1"/>
</dbReference>
<protein>
    <recommendedName>
        <fullName evidence="1">Methionine import ATP-binding protein MetN 2</fullName>
        <ecNumber evidence="1">7.4.2.11</ecNumber>
    </recommendedName>
</protein>
<sequence length="386" mass="41236">MANLFDAPQFIEDAPSLAVNAESHTTATQPAVIFDDVGKVFANTRGVATAALANVTLNVARGEVFGIIGRSGAGKSTLLRLVNGLEKPSSGAVRVNGVSVGELDERGLVTLRRRIGMVFQHFNLLSAKTVRENIALPLKIAGVPKAAIEKKVDALLELVGLSAKRDAYPASLSGGQKQRVGIARALVTDPDILLCDEATSALDPETTQAILALLRDINQRLNLTVVLITHEMQVIREVCDTVAVIERGEVVETGPVWRVFGDPQHDATRALLRTLVHDLPTDLAERVKPLHDIAQADAQILLDVRFTGADAREPDLGGLASALSVEGGRVSFVHGGIDRIQGHAQGRLVVSAQVRANADSTVQAQIATLLERARRYANHVEVLGYV</sequence>
<name>METN2_PARXL</name>
<proteinExistence type="inferred from homology"/>
<accession>Q13LD8</accession>
<evidence type="ECO:0000255" key="1">
    <source>
        <dbReference type="HAMAP-Rule" id="MF_01719"/>
    </source>
</evidence>
<organism>
    <name type="scientific">Paraburkholderia xenovorans (strain LB400)</name>
    <dbReference type="NCBI Taxonomy" id="266265"/>
    <lineage>
        <taxon>Bacteria</taxon>
        <taxon>Pseudomonadati</taxon>
        <taxon>Pseudomonadota</taxon>
        <taxon>Betaproteobacteria</taxon>
        <taxon>Burkholderiales</taxon>
        <taxon>Burkholderiaceae</taxon>
        <taxon>Paraburkholderia</taxon>
    </lineage>
</organism>